<name>RRF_CAMJD</name>
<sequence>MLNEIFNKQKTQSEKSLEALKKDFTTLRTGKINTHILDHITVDYYGNQTPLNQVATVLASDASTISITPWEKPLLKTIESAIAAANIGVNPNNDGESVKLFFPPMTREQREENVKQAKAMGEKAKVSIRNIRKDANDAVKKLEKDKAISEDEAKKAYDEVQKLTDVYTTKIDESVKSKESELLKV</sequence>
<comment type="function">
    <text evidence="1">Responsible for the release of ribosomes from messenger RNA at the termination of protein biosynthesis. May increase the efficiency of translation by recycling ribosomes from one round of translation to another.</text>
</comment>
<comment type="subcellular location">
    <subcellularLocation>
        <location evidence="1">Cytoplasm</location>
    </subcellularLocation>
</comment>
<comment type="similarity">
    <text evidence="1">Belongs to the RRF family.</text>
</comment>
<gene>
    <name evidence="1" type="primary">frr</name>
    <name type="ordered locus">JJD26997_0232</name>
</gene>
<accession>A7H1T3</accession>
<protein>
    <recommendedName>
        <fullName evidence="1">Ribosome-recycling factor</fullName>
        <shortName evidence="1">RRF</shortName>
    </recommendedName>
    <alternativeName>
        <fullName evidence="1">Ribosome-releasing factor</fullName>
    </alternativeName>
</protein>
<keyword id="KW-0963">Cytoplasm</keyword>
<keyword id="KW-0648">Protein biosynthesis</keyword>
<reference key="1">
    <citation type="submission" date="2007-07" db="EMBL/GenBank/DDBJ databases">
        <title>Complete genome sequence of Campylobacter jejuni subsp doylei 269.97 isolated from human blood.</title>
        <authorList>
            <person name="Fouts D.E."/>
            <person name="Mongodin E.F."/>
            <person name="Puiu D."/>
            <person name="Sebastian Y."/>
            <person name="Miller W.G."/>
            <person name="Mandrell R.E."/>
            <person name="Lastovica A.J."/>
            <person name="Nelson K.E."/>
        </authorList>
    </citation>
    <scope>NUCLEOTIDE SEQUENCE [LARGE SCALE GENOMIC DNA]</scope>
    <source>
        <strain>ATCC BAA-1458 / RM4099 / 269.97</strain>
    </source>
</reference>
<feature type="chain" id="PRO_1000003132" description="Ribosome-recycling factor">
    <location>
        <begin position="1"/>
        <end position="185"/>
    </location>
</feature>
<organism>
    <name type="scientific">Campylobacter jejuni subsp. doylei (strain ATCC BAA-1458 / RM4099 / 269.97)</name>
    <dbReference type="NCBI Taxonomy" id="360109"/>
    <lineage>
        <taxon>Bacteria</taxon>
        <taxon>Pseudomonadati</taxon>
        <taxon>Campylobacterota</taxon>
        <taxon>Epsilonproteobacteria</taxon>
        <taxon>Campylobacterales</taxon>
        <taxon>Campylobacteraceae</taxon>
        <taxon>Campylobacter</taxon>
    </lineage>
</organism>
<proteinExistence type="inferred from homology"/>
<evidence type="ECO:0000255" key="1">
    <source>
        <dbReference type="HAMAP-Rule" id="MF_00040"/>
    </source>
</evidence>
<dbReference type="EMBL" id="CP000768">
    <property type="protein sequence ID" value="ABS44563.1"/>
    <property type="molecule type" value="Genomic_DNA"/>
</dbReference>
<dbReference type="SMR" id="A7H1T3"/>
<dbReference type="KEGG" id="cjd:JJD26997_0232"/>
<dbReference type="HOGENOM" id="CLU_073981_2_0_7"/>
<dbReference type="Proteomes" id="UP000002302">
    <property type="component" value="Chromosome"/>
</dbReference>
<dbReference type="GO" id="GO:0005829">
    <property type="term" value="C:cytosol"/>
    <property type="evidence" value="ECO:0007669"/>
    <property type="project" value="GOC"/>
</dbReference>
<dbReference type="GO" id="GO:0043023">
    <property type="term" value="F:ribosomal large subunit binding"/>
    <property type="evidence" value="ECO:0007669"/>
    <property type="project" value="TreeGrafter"/>
</dbReference>
<dbReference type="GO" id="GO:0002184">
    <property type="term" value="P:cytoplasmic translational termination"/>
    <property type="evidence" value="ECO:0007669"/>
    <property type="project" value="TreeGrafter"/>
</dbReference>
<dbReference type="CDD" id="cd00520">
    <property type="entry name" value="RRF"/>
    <property type="match status" value="1"/>
</dbReference>
<dbReference type="FunFam" id="1.10.132.20:FF:000001">
    <property type="entry name" value="Ribosome-recycling factor"/>
    <property type="match status" value="1"/>
</dbReference>
<dbReference type="FunFam" id="3.30.1360.40:FF:000001">
    <property type="entry name" value="Ribosome-recycling factor"/>
    <property type="match status" value="1"/>
</dbReference>
<dbReference type="Gene3D" id="3.30.1360.40">
    <property type="match status" value="1"/>
</dbReference>
<dbReference type="Gene3D" id="1.10.132.20">
    <property type="entry name" value="Ribosome-recycling factor"/>
    <property type="match status" value="1"/>
</dbReference>
<dbReference type="HAMAP" id="MF_00040">
    <property type="entry name" value="RRF"/>
    <property type="match status" value="1"/>
</dbReference>
<dbReference type="InterPro" id="IPR002661">
    <property type="entry name" value="Ribosome_recyc_fac"/>
</dbReference>
<dbReference type="InterPro" id="IPR023584">
    <property type="entry name" value="Ribosome_recyc_fac_dom"/>
</dbReference>
<dbReference type="InterPro" id="IPR036191">
    <property type="entry name" value="RRF_sf"/>
</dbReference>
<dbReference type="NCBIfam" id="TIGR00496">
    <property type="entry name" value="frr"/>
    <property type="match status" value="1"/>
</dbReference>
<dbReference type="PANTHER" id="PTHR20982:SF3">
    <property type="entry name" value="MITOCHONDRIAL RIBOSOME RECYCLING FACTOR PSEUDO 1"/>
    <property type="match status" value="1"/>
</dbReference>
<dbReference type="PANTHER" id="PTHR20982">
    <property type="entry name" value="RIBOSOME RECYCLING FACTOR"/>
    <property type="match status" value="1"/>
</dbReference>
<dbReference type="Pfam" id="PF01765">
    <property type="entry name" value="RRF"/>
    <property type="match status" value="1"/>
</dbReference>
<dbReference type="SUPFAM" id="SSF55194">
    <property type="entry name" value="Ribosome recycling factor, RRF"/>
    <property type="match status" value="1"/>
</dbReference>